<dbReference type="EMBL" id="CP000090">
    <property type="protein sequence ID" value="AAZ62530.1"/>
    <property type="molecule type" value="Genomic_DNA"/>
</dbReference>
<dbReference type="SMR" id="Q46WF3"/>
<dbReference type="STRING" id="264198.Reut_A3170"/>
<dbReference type="KEGG" id="reu:Reut_A3170"/>
<dbReference type="eggNOG" id="COG0186">
    <property type="taxonomic scope" value="Bacteria"/>
</dbReference>
<dbReference type="HOGENOM" id="CLU_073626_1_1_4"/>
<dbReference type="OrthoDB" id="9811714at2"/>
<dbReference type="GO" id="GO:0022627">
    <property type="term" value="C:cytosolic small ribosomal subunit"/>
    <property type="evidence" value="ECO:0007669"/>
    <property type="project" value="TreeGrafter"/>
</dbReference>
<dbReference type="GO" id="GO:0019843">
    <property type="term" value="F:rRNA binding"/>
    <property type="evidence" value="ECO:0007669"/>
    <property type="project" value="UniProtKB-UniRule"/>
</dbReference>
<dbReference type="GO" id="GO:0003735">
    <property type="term" value="F:structural constituent of ribosome"/>
    <property type="evidence" value="ECO:0007669"/>
    <property type="project" value="InterPro"/>
</dbReference>
<dbReference type="GO" id="GO:0006412">
    <property type="term" value="P:translation"/>
    <property type="evidence" value="ECO:0007669"/>
    <property type="project" value="UniProtKB-UniRule"/>
</dbReference>
<dbReference type="CDD" id="cd00364">
    <property type="entry name" value="Ribosomal_uS17"/>
    <property type="match status" value="1"/>
</dbReference>
<dbReference type="Gene3D" id="2.40.50.140">
    <property type="entry name" value="Nucleic acid-binding proteins"/>
    <property type="match status" value="1"/>
</dbReference>
<dbReference type="HAMAP" id="MF_01345_B">
    <property type="entry name" value="Ribosomal_uS17_B"/>
    <property type="match status" value="1"/>
</dbReference>
<dbReference type="InterPro" id="IPR012340">
    <property type="entry name" value="NA-bd_OB-fold"/>
</dbReference>
<dbReference type="InterPro" id="IPR000266">
    <property type="entry name" value="Ribosomal_uS17"/>
</dbReference>
<dbReference type="InterPro" id="IPR019984">
    <property type="entry name" value="Ribosomal_uS17_bact/chlr"/>
</dbReference>
<dbReference type="InterPro" id="IPR019979">
    <property type="entry name" value="Ribosomal_uS17_CS"/>
</dbReference>
<dbReference type="NCBIfam" id="NF004123">
    <property type="entry name" value="PRK05610.1"/>
    <property type="match status" value="1"/>
</dbReference>
<dbReference type="NCBIfam" id="TIGR03635">
    <property type="entry name" value="uS17_bact"/>
    <property type="match status" value="1"/>
</dbReference>
<dbReference type="PANTHER" id="PTHR10744">
    <property type="entry name" value="40S RIBOSOMAL PROTEIN S11 FAMILY MEMBER"/>
    <property type="match status" value="1"/>
</dbReference>
<dbReference type="PANTHER" id="PTHR10744:SF1">
    <property type="entry name" value="SMALL RIBOSOMAL SUBUNIT PROTEIN US17M"/>
    <property type="match status" value="1"/>
</dbReference>
<dbReference type="Pfam" id="PF00366">
    <property type="entry name" value="Ribosomal_S17"/>
    <property type="match status" value="1"/>
</dbReference>
<dbReference type="PRINTS" id="PR00973">
    <property type="entry name" value="RIBOSOMALS17"/>
</dbReference>
<dbReference type="SUPFAM" id="SSF50249">
    <property type="entry name" value="Nucleic acid-binding proteins"/>
    <property type="match status" value="1"/>
</dbReference>
<dbReference type="PROSITE" id="PS00056">
    <property type="entry name" value="RIBOSOMAL_S17"/>
    <property type="match status" value="1"/>
</dbReference>
<protein>
    <recommendedName>
        <fullName evidence="1">Small ribosomal subunit protein uS17</fullName>
    </recommendedName>
    <alternativeName>
        <fullName evidence="2">30S ribosomal protein S17</fullName>
    </alternativeName>
</protein>
<name>RS17_CUPPJ</name>
<evidence type="ECO:0000255" key="1">
    <source>
        <dbReference type="HAMAP-Rule" id="MF_01345"/>
    </source>
</evidence>
<evidence type="ECO:0000305" key="2"/>
<proteinExistence type="inferred from homology"/>
<feature type="chain" id="PRO_0000233550" description="Small ribosomal subunit protein uS17">
    <location>
        <begin position="1"/>
        <end position="92"/>
    </location>
</feature>
<sequence>MTEAAKTETSLRRTLVGRVVSDKMDKTVTVLVENRVKHPLYGKYVLRSKKYHAHDEANQYKEGDKVEIQEGRPLSRTKSWVVSRLVEAARVI</sequence>
<reference key="1">
    <citation type="journal article" date="2010" name="PLoS ONE">
        <title>The complete multipartite genome sequence of Cupriavidus necator JMP134, a versatile pollutant degrader.</title>
        <authorList>
            <person name="Lykidis A."/>
            <person name="Perez-Pantoja D."/>
            <person name="Ledger T."/>
            <person name="Mavromatis K."/>
            <person name="Anderson I.J."/>
            <person name="Ivanova N.N."/>
            <person name="Hooper S.D."/>
            <person name="Lapidus A."/>
            <person name="Lucas S."/>
            <person name="Gonzalez B."/>
            <person name="Kyrpides N.C."/>
        </authorList>
    </citation>
    <scope>NUCLEOTIDE SEQUENCE [LARGE SCALE GENOMIC DNA]</scope>
    <source>
        <strain>JMP134 / LMG 1197</strain>
    </source>
</reference>
<keyword id="KW-0687">Ribonucleoprotein</keyword>
<keyword id="KW-0689">Ribosomal protein</keyword>
<keyword id="KW-0694">RNA-binding</keyword>
<keyword id="KW-0699">rRNA-binding</keyword>
<comment type="function">
    <text evidence="1">One of the primary rRNA binding proteins, it binds specifically to the 5'-end of 16S ribosomal RNA.</text>
</comment>
<comment type="subunit">
    <text evidence="1">Part of the 30S ribosomal subunit.</text>
</comment>
<comment type="similarity">
    <text evidence="1">Belongs to the universal ribosomal protein uS17 family.</text>
</comment>
<organism>
    <name type="scientific">Cupriavidus pinatubonensis (strain JMP 134 / LMG 1197)</name>
    <name type="common">Cupriavidus necator (strain JMP 134)</name>
    <dbReference type="NCBI Taxonomy" id="264198"/>
    <lineage>
        <taxon>Bacteria</taxon>
        <taxon>Pseudomonadati</taxon>
        <taxon>Pseudomonadota</taxon>
        <taxon>Betaproteobacteria</taxon>
        <taxon>Burkholderiales</taxon>
        <taxon>Burkholderiaceae</taxon>
        <taxon>Cupriavidus</taxon>
    </lineage>
</organism>
<accession>Q46WF3</accession>
<gene>
    <name evidence="1" type="primary">rpsQ</name>
    <name type="ordered locus">Reut_A3170</name>
</gene>